<name>RS12_ALISL</name>
<reference key="1">
    <citation type="journal article" date="2008" name="BMC Genomics">
        <title>The genome sequence of the fish pathogen Aliivibrio salmonicida strain LFI1238 shows extensive evidence of gene decay.</title>
        <authorList>
            <person name="Hjerde E."/>
            <person name="Lorentzen M.S."/>
            <person name="Holden M.T."/>
            <person name="Seeger K."/>
            <person name="Paulsen S."/>
            <person name="Bason N."/>
            <person name="Churcher C."/>
            <person name="Harris D."/>
            <person name="Norbertczak H."/>
            <person name="Quail M.A."/>
            <person name="Sanders S."/>
            <person name="Thurston S."/>
            <person name="Parkhill J."/>
            <person name="Willassen N.P."/>
            <person name="Thomson N.R."/>
        </authorList>
    </citation>
    <scope>NUCLEOTIDE SEQUENCE [LARGE SCALE GENOMIC DNA]</scope>
    <source>
        <strain>LFI1238</strain>
    </source>
</reference>
<accession>B6EPR5</accession>
<proteinExistence type="inferred from homology"/>
<sequence>MATINQLVRQPRAKQVVKSNVPALEACPQKRGVCTRVYTTTPKKPNSALRKVCRVRLTNGFEVTSYIGGEGHNLQEHSVVLIRGGRVKDLPGVRYHTVRGALDCAGVNDRKKGRSKYGVKRPKS</sequence>
<organism>
    <name type="scientific">Aliivibrio salmonicida (strain LFI1238)</name>
    <name type="common">Vibrio salmonicida (strain LFI1238)</name>
    <dbReference type="NCBI Taxonomy" id="316275"/>
    <lineage>
        <taxon>Bacteria</taxon>
        <taxon>Pseudomonadati</taxon>
        <taxon>Pseudomonadota</taxon>
        <taxon>Gammaproteobacteria</taxon>
        <taxon>Vibrionales</taxon>
        <taxon>Vibrionaceae</taxon>
        <taxon>Aliivibrio</taxon>
    </lineage>
</organism>
<dbReference type="EMBL" id="FM178379">
    <property type="protein sequence ID" value="CAQ77995.1"/>
    <property type="molecule type" value="Genomic_DNA"/>
</dbReference>
<dbReference type="RefSeq" id="WP_012549145.1">
    <property type="nucleotide sequence ID" value="NC_011312.1"/>
</dbReference>
<dbReference type="SMR" id="B6EPR5"/>
<dbReference type="KEGG" id="vsa:VSAL_I0310"/>
<dbReference type="eggNOG" id="COG0048">
    <property type="taxonomic scope" value="Bacteria"/>
</dbReference>
<dbReference type="HOGENOM" id="CLU_104295_1_2_6"/>
<dbReference type="Proteomes" id="UP000001730">
    <property type="component" value="Chromosome 1"/>
</dbReference>
<dbReference type="GO" id="GO:0015935">
    <property type="term" value="C:small ribosomal subunit"/>
    <property type="evidence" value="ECO:0007669"/>
    <property type="project" value="InterPro"/>
</dbReference>
<dbReference type="GO" id="GO:0019843">
    <property type="term" value="F:rRNA binding"/>
    <property type="evidence" value="ECO:0007669"/>
    <property type="project" value="UniProtKB-UniRule"/>
</dbReference>
<dbReference type="GO" id="GO:0003735">
    <property type="term" value="F:structural constituent of ribosome"/>
    <property type="evidence" value="ECO:0007669"/>
    <property type="project" value="InterPro"/>
</dbReference>
<dbReference type="GO" id="GO:0000049">
    <property type="term" value="F:tRNA binding"/>
    <property type="evidence" value="ECO:0007669"/>
    <property type="project" value="UniProtKB-UniRule"/>
</dbReference>
<dbReference type="GO" id="GO:0006412">
    <property type="term" value="P:translation"/>
    <property type="evidence" value="ECO:0007669"/>
    <property type="project" value="UniProtKB-UniRule"/>
</dbReference>
<dbReference type="CDD" id="cd03368">
    <property type="entry name" value="Ribosomal_S12"/>
    <property type="match status" value="1"/>
</dbReference>
<dbReference type="FunFam" id="2.40.50.140:FF:000001">
    <property type="entry name" value="30S ribosomal protein S12"/>
    <property type="match status" value="1"/>
</dbReference>
<dbReference type="Gene3D" id="2.40.50.140">
    <property type="entry name" value="Nucleic acid-binding proteins"/>
    <property type="match status" value="1"/>
</dbReference>
<dbReference type="HAMAP" id="MF_00403_B">
    <property type="entry name" value="Ribosomal_uS12_B"/>
    <property type="match status" value="1"/>
</dbReference>
<dbReference type="InterPro" id="IPR012340">
    <property type="entry name" value="NA-bd_OB-fold"/>
</dbReference>
<dbReference type="InterPro" id="IPR006032">
    <property type="entry name" value="Ribosomal_uS12"/>
</dbReference>
<dbReference type="InterPro" id="IPR005679">
    <property type="entry name" value="Ribosomal_uS12_bac"/>
</dbReference>
<dbReference type="NCBIfam" id="TIGR00981">
    <property type="entry name" value="rpsL_bact"/>
    <property type="match status" value="1"/>
</dbReference>
<dbReference type="PANTHER" id="PTHR11652">
    <property type="entry name" value="30S RIBOSOMAL PROTEIN S12 FAMILY MEMBER"/>
    <property type="match status" value="1"/>
</dbReference>
<dbReference type="Pfam" id="PF00164">
    <property type="entry name" value="Ribosom_S12_S23"/>
    <property type="match status" value="1"/>
</dbReference>
<dbReference type="PIRSF" id="PIRSF002133">
    <property type="entry name" value="Ribosomal_S12/S23"/>
    <property type="match status" value="1"/>
</dbReference>
<dbReference type="PRINTS" id="PR01034">
    <property type="entry name" value="RIBOSOMALS12"/>
</dbReference>
<dbReference type="SUPFAM" id="SSF50249">
    <property type="entry name" value="Nucleic acid-binding proteins"/>
    <property type="match status" value="1"/>
</dbReference>
<dbReference type="PROSITE" id="PS00055">
    <property type="entry name" value="RIBOSOMAL_S12"/>
    <property type="match status" value="1"/>
</dbReference>
<protein>
    <recommendedName>
        <fullName evidence="2">Small ribosomal subunit protein uS12</fullName>
    </recommendedName>
    <alternativeName>
        <fullName evidence="3">30S ribosomal protein S12</fullName>
    </alternativeName>
</protein>
<comment type="function">
    <text evidence="2">With S4 and S5 plays an important role in translational accuracy.</text>
</comment>
<comment type="function">
    <text evidence="2">Interacts with and stabilizes bases of the 16S rRNA that are involved in tRNA selection in the A site and with the mRNA backbone. Located at the interface of the 30S and 50S subunits, it traverses the body of the 30S subunit contacting proteins on the other side and probably holding the rRNA structure together. The combined cluster of proteins S8, S12 and S17 appears to hold together the shoulder and platform of the 30S subunit.</text>
</comment>
<comment type="subunit">
    <text evidence="2">Part of the 30S ribosomal subunit. Contacts proteins S8 and S17. May interact with IF1 in the 30S initiation complex.</text>
</comment>
<comment type="similarity">
    <text evidence="2">Belongs to the universal ribosomal protein uS12 family.</text>
</comment>
<feature type="chain" id="PRO_1000194112" description="Small ribosomal subunit protein uS12">
    <location>
        <begin position="1"/>
        <end position="124"/>
    </location>
</feature>
<feature type="modified residue" description="3-methylthioaspartic acid" evidence="1">
    <location>
        <position position="89"/>
    </location>
</feature>
<evidence type="ECO:0000250" key="1"/>
<evidence type="ECO:0000255" key="2">
    <source>
        <dbReference type="HAMAP-Rule" id="MF_00403"/>
    </source>
</evidence>
<evidence type="ECO:0000305" key="3"/>
<keyword id="KW-0488">Methylation</keyword>
<keyword id="KW-0687">Ribonucleoprotein</keyword>
<keyword id="KW-0689">Ribosomal protein</keyword>
<keyword id="KW-0694">RNA-binding</keyword>
<keyword id="KW-0699">rRNA-binding</keyword>
<keyword id="KW-0820">tRNA-binding</keyword>
<gene>
    <name evidence="2" type="primary">rpsL</name>
    <name type="ordered locus">VSAL_I0310</name>
</gene>